<name>HMGCS_METAC</name>
<protein>
    <recommendedName>
        <fullName evidence="1">Hydroxymethylglutaryl-CoA synthase</fullName>
        <shortName evidence="1">HMG-CoA synthase</shortName>
        <shortName evidence="1">HMGCS</shortName>
        <ecNumber evidence="1">2.3.3.10</ecNumber>
    </recommendedName>
</protein>
<gene>
    <name type="ordered locus">MA_4041</name>
</gene>
<sequence>MTIGIVSYGAYVPRYRIKIEEIARLWGDDAEALKNGLMVYEKSVPDVDEDAATIAVEAARYAMARSGVDPSRIGAVYTGSESHPYAVKPTSTIVAQAIGATPEMTAADFEFACKAGTAAVQACMGLVGSGMIDLGLAIGADVSQGAPSDALEYTAAAGGVACLIGRKESELAAIIEDTYSFTTDTPDFWRREGMPYPEHGGRFTGEPGYFKHVTNGAKGLLEKLGTKPEDYDYAVFHQPNGKFPSKAAKILGFTKAQITPGLVVPKIGNTYSGSCLMGIAATLDQAKPGDRIFATAFGSGAGSDAFSITVTDRIEEIRNRAPKVSELIKDPVYIDYARYARHKGKIRLA</sequence>
<evidence type="ECO:0000255" key="1">
    <source>
        <dbReference type="HAMAP-Rule" id="MF_01409"/>
    </source>
</evidence>
<reference key="1">
    <citation type="journal article" date="2002" name="Genome Res.">
        <title>The genome of Methanosarcina acetivorans reveals extensive metabolic and physiological diversity.</title>
        <authorList>
            <person name="Galagan J.E."/>
            <person name="Nusbaum C."/>
            <person name="Roy A."/>
            <person name="Endrizzi M.G."/>
            <person name="Macdonald P."/>
            <person name="FitzHugh W."/>
            <person name="Calvo S."/>
            <person name="Engels R."/>
            <person name="Smirnov S."/>
            <person name="Atnoor D."/>
            <person name="Brown A."/>
            <person name="Allen N."/>
            <person name="Naylor J."/>
            <person name="Stange-Thomann N."/>
            <person name="DeArellano K."/>
            <person name="Johnson R."/>
            <person name="Linton L."/>
            <person name="McEwan P."/>
            <person name="McKernan K."/>
            <person name="Talamas J."/>
            <person name="Tirrell A."/>
            <person name="Ye W."/>
            <person name="Zimmer A."/>
            <person name="Barber R.D."/>
            <person name="Cann I."/>
            <person name="Graham D.E."/>
            <person name="Grahame D.A."/>
            <person name="Guss A.M."/>
            <person name="Hedderich R."/>
            <person name="Ingram-Smith C."/>
            <person name="Kuettner H.C."/>
            <person name="Krzycki J.A."/>
            <person name="Leigh J.A."/>
            <person name="Li W."/>
            <person name="Liu J."/>
            <person name="Mukhopadhyay B."/>
            <person name="Reeve J.N."/>
            <person name="Smith K."/>
            <person name="Springer T.A."/>
            <person name="Umayam L.A."/>
            <person name="White O."/>
            <person name="White R.H."/>
            <person name="de Macario E.C."/>
            <person name="Ferry J.G."/>
            <person name="Jarrell K.F."/>
            <person name="Jing H."/>
            <person name="Macario A.J.L."/>
            <person name="Paulsen I.T."/>
            <person name="Pritchett M."/>
            <person name="Sowers K.R."/>
            <person name="Swanson R.V."/>
            <person name="Zinder S.H."/>
            <person name="Lander E."/>
            <person name="Metcalf W.W."/>
            <person name="Birren B."/>
        </authorList>
    </citation>
    <scope>NUCLEOTIDE SEQUENCE [LARGE SCALE GENOMIC DNA]</scope>
    <source>
        <strain>ATCC 35395 / DSM 2834 / JCM 12185 / C2A</strain>
    </source>
</reference>
<accession>Q8TIV0</accession>
<feature type="chain" id="PRO_0000057613" description="Hydroxymethylglutaryl-CoA synthase">
    <location>
        <begin position="1"/>
        <end position="349"/>
    </location>
</feature>
<feature type="active site" description="Proton donor/acceptor" evidence="1">
    <location>
        <position position="81"/>
    </location>
</feature>
<feature type="active site" description="Acyl-thioester intermediate" evidence="1">
    <location>
        <position position="113"/>
    </location>
</feature>
<feature type="active site" description="Proton donor/acceptor" evidence="1">
    <location>
        <position position="237"/>
    </location>
</feature>
<feature type="binding site" evidence="1">
    <location>
        <position position="29"/>
    </location>
    <ligand>
        <name>(3S)-3-hydroxy-3-methylglutaryl-CoA</name>
        <dbReference type="ChEBI" id="CHEBI:43074"/>
    </ligand>
</feature>
<feature type="binding site" evidence="1">
    <location>
        <position position="30"/>
    </location>
    <ligand>
        <name>(3S)-3-hydroxy-3-methylglutaryl-CoA</name>
        <dbReference type="ChEBI" id="CHEBI:43074"/>
    </ligand>
</feature>
<feature type="binding site" evidence="1">
    <location>
        <position position="113"/>
    </location>
    <ligand>
        <name>(3S)-3-hydroxy-3-methylglutaryl-CoA</name>
        <dbReference type="ChEBI" id="CHEBI:43074"/>
    </ligand>
</feature>
<feature type="binding site" evidence="1">
    <location>
        <position position="154"/>
    </location>
    <ligand>
        <name>(3S)-3-hydroxy-3-methylglutaryl-CoA</name>
        <dbReference type="ChEBI" id="CHEBI:43074"/>
    </ligand>
</feature>
<feature type="binding site" evidence="1">
    <location>
        <position position="202"/>
    </location>
    <ligand>
        <name>CoA</name>
        <dbReference type="ChEBI" id="CHEBI:57287"/>
        <note>ligand shared with acetoacetyl-CoA thiolase</note>
    </ligand>
</feature>
<feature type="binding site" evidence="1">
    <location>
        <position position="204"/>
    </location>
    <ligand>
        <name>(3S)-3-hydroxy-3-methylglutaryl-CoA</name>
        <dbReference type="ChEBI" id="CHEBI:43074"/>
    </ligand>
</feature>
<feature type="binding site" evidence="1">
    <location>
        <position position="237"/>
    </location>
    <ligand>
        <name>(3S)-3-hydroxy-3-methylglutaryl-CoA</name>
        <dbReference type="ChEBI" id="CHEBI:43074"/>
    </ligand>
</feature>
<feature type="binding site" evidence="1">
    <location>
        <position position="242"/>
    </location>
    <ligand>
        <name>CoA</name>
        <dbReference type="ChEBI" id="CHEBI:57287"/>
        <note>ligand shared with acetoacetyl-CoA thiolase</note>
    </ligand>
</feature>
<feature type="binding site" evidence="1">
    <location>
        <position position="246"/>
    </location>
    <ligand>
        <name>(3S)-3-hydroxy-3-methylglutaryl-CoA</name>
        <dbReference type="ChEBI" id="CHEBI:43074"/>
    </ligand>
</feature>
<feature type="binding site" evidence="1">
    <location>
        <position position="269"/>
    </location>
    <ligand>
        <name>(3S)-3-hydroxy-3-methylglutaryl-CoA</name>
        <dbReference type="ChEBI" id="CHEBI:43074"/>
    </ligand>
</feature>
<feature type="binding site" evidence="1">
    <location>
        <position position="299"/>
    </location>
    <ligand>
        <name>(3S)-3-hydroxy-3-methylglutaryl-CoA</name>
        <dbReference type="ChEBI" id="CHEBI:43074"/>
    </ligand>
</feature>
<organism>
    <name type="scientific">Methanosarcina acetivorans (strain ATCC 35395 / DSM 2834 / JCM 12185 / C2A)</name>
    <dbReference type="NCBI Taxonomy" id="188937"/>
    <lineage>
        <taxon>Archaea</taxon>
        <taxon>Methanobacteriati</taxon>
        <taxon>Methanobacteriota</taxon>
        <taxon>Stenosarchaea group</taxon>
        <taxon>Methanomicrobia</taxon>
        <taxon>Methanosarcinales</taxon>
        <taxon>Methanosarcinaceae</taxon>
        <taxon>Methanosarcina</taxon>
    </lineage>
</organism>
<comment type="function">
    <text evidence="1">Catalyzes the condensation of acetyl-CoA with acetoacetyl-CoA to form 3-hydroxy-3-methylglutaryl-CoA (HMG-CoA). Functions in the mevalonate (MVA) pathway leading to isopentenyl diphosphate (IPP), a key precursor for the biosynthesis of isoprenoid compounds that are building blocks of archaeal membrane lipids.</text>
</comment>
<comment type="catalytic activity">
    <reaction evidence="1">
        <text>acetoacetyl-CoA + acetyl-CoA + H2O = (3S)-3-hydroxy-3-methylglutaryl-CoA + CoA + H(+)</text>
        <dbReference type="Rhea" id="RHEA:10188"/>
        <dbReference type="ChEBI" id="CHEBI:15377"/>
        <dbReference type="ChEBI" id="CHEBI:15378"/>
        <dbReference type="ChEBI" id="CHEBI:43074"/>
        <dbReference type="ChEBI" id="CHEBI:57286"/>
        <dbReference type="ChEBI" id="CHEBI:57287"/>
        <dbReference type="ChEBI" id="CHEBI:57288"/>
        <dbReference type="EC" id="2.3.3.10"/>
    </reaction>
    <physiologicalReaction direction="left-to-right" evidence="1">
        <dbReference type="Rhea" id="RHEA:10189"/>
    </physiologicalReaction>
</comment>
<comment type="pathway">
    <text evidence="1">Metabolic intermediate biosynthesis; (R)-mevalonate biosynthesis; (R)-mevalonate from acetyl-CoA: step 2/3.</text>
</comment>
<comment type="subunit">
    <text evidence="1">Interacts with acetoacetyl-CoA thiolase that catalyzes the precedent step in the pathway and with a DUF35 protein. The acetoacetyl-CoA thiolase/HMG-CoA synthase complex channels the intermediate via a fused CoA-binding site, which allows for efficient coupling of the endergonic thiolase reaction with the exergonic HMGCS reaction.</text>
</comment>
<comment type="similarity">
    <text evidence="1">Belongs to the thiolase-like superfamily. Archaeal HMG-CoA synthase family.</text>
</comment>
<proteinExistence type="inferred from homology"/>
<dbReference type="EC" id="2.3.3.10" evidence="1"/>
<dbReference type="EMBL" id="AE010299">
    <property type="protein sequence ID" value="AAM07389.1"/>
    <property type="molecule type" value="Genomic_DNA"/>
</dbReference>
<dbReference type="RefSeq" id="WP_011023934.1">
    <property type="nucleotide sequence ID" value="NC_003552.1"/>
</dbReference>
<dbReference type="SMR" id="Q8TIV0"/>
<dbReference type="FunCoup" id="Q8TIV0">
    <property type="interactions" value="75"/>
</dbReference>
<dbReference type="STRING" id="188937.MA_4041"/>
<dbReference type="EnsemblBacteria" id="AAM07389">
    <property type="protein sequence ID" value="AAM07389"/>
    <property type="gene ID" value="MA_4041"/>
</dbReference>
<dbReference type="GeneID" id="1475935"/>
<dbReference type="KEGG" id="mac:MA_4041"/>
<dbReference type="HOGENOM" id="CLU_039592_7_0_2"/>
<dbReference type="InParanoid" id="Q8TIV0"/>
<dbReference type="OrthoDB" id="5812at2157"/>
<dbReference type="PhylomeDB" id="Q8TIV0"/>
<dbReference type="UniPathway" id="UPA00058">
    <property type="reaction ID" value="UER00102"/>
</dbReference>
<dbReference type="Proteomes" id="UP000002487">
    <property type="component" value="Chromosome"/>
</dbReference>
<dbReference type="GO" id="GO:0003985">
    <property type="term" value="F:acetyl-CoA C-acetyltransferase activity"/>
    <property type="evidence" value="ECO:0007669"/>
    <property type="project" value="UniProtKB-UniRule"/>
</dbReference>
<dbReference type="GO" id="GO:0004421">
    <property type="term" value="F:hydroxymethylglutaryl-CoA synthase activity"/>
    <property type="evidence" value="ECO:0000318"/>
    <property type="project" value="GO_Central"/>
</dbReference>
<dbReference type="GO" id="GO:0006084">
    <property type="term" value="P:acetyl-CoA metabolic process"/>
    <property type="evidence" value="ECO:0000318"/>
    <property type="project" value="GO_Central"/>
</dbReference>
<dbReference type="GO" id="GO:0010142">
    <property type="term" value="P:farnesyl diphosphate biosynthetic process, mevalonate pathway"/>
    <property type="evidence" value="ECO:0000318"/>
    <property type="project" value="GO_Central"/>
</dbReference>
<dbReference type="GO" id="GO:0019287">
    <property type="term" value="P:isopentenyl diphosphate biosynthetic process, mevalonate pathway"/>
    <property type="evidence" value="ECO:0007669"/>
    <property type="project" value="UniProtKB-UniRule"/>
</dbReference>
<dbReference type="CDD" id="cd00827">
    <property type="entry name" value="init_cond_enzymes"/>
    <property type="match status" value="1"/>
</dbReference>
<dbReference type="FunFam" id="3.40.47.10:FF:000046">
    <property type="entry name" value="UPF0219 protein M1627_1703"/>
    <property type="match status" value="1"/>
</dbReference>
<dbReference type="Gene3D" id="3.40.47.10">
    <property type="match status" value="1"/>
</dbReference>
<dbReference type="HAMAP" id="MF_01409">
    <property type="entry name" value="HMG_CoA_synth_arch"/>
    <property type="match status" value="1"/>
</dbReference>
<dbReference type="InterPro" id="IPR013747">
    <property type="entry name" value="ACP_syn_III_C"/>
</dbReference>
<dbReference type="InterPro" id="IPR004656">
    <property type="entry name" value="HMG_CoA_Synthase"/>
</dbReference>
<dbReference type="InterPro" id="IPR016039">
    <property type="entry name" value="Thiolase-like"/>
</dbReference>
<dbReference type="NCBIfam" id="TIGR00748">
    <property type="entry name" value="HMG_CoA_syn_Arc"/>
    <property type="match status" value="1"/>
</dbReference>
<dbReference type="NCBIfam" id="NF003274">
    <property type="entry name" value="PRK04262.1"/>
    <property type="match status" value="1"/>
</dbReference>
<dbReference type="PANTHER" id="PTHR43323">
    <property type="entry name" value="3-HYDROXY-3-METHYLGLUTARYL COENZYME A SYNTHASE"/>
    <property type="match status" value="1"/>
</dbReference>
<dbReference type="PANTHER" id="PTHR43323:SF2">
    <property type="entry name" value="HYDROXYMETHYLGLUTARYL-COA SYNTHASE"/>
    <property type="match status" value="1"/>
</dbReference>
<dbReference type="Pfam" id="PF08541">
    <property type="entry name" value="ACP_syn_III_C"/>
    <property type="match status" value="1"/>
</dbReference>
<dbReference type="SUPFAM" id="SSF53901">
    <property type="entry name" value="Thiolase-like"/>
    <property type="match status" value="2"/>
</dbReference>
<keyword id="KW-0012">Acyltransferase</keyword>
<keyword id="KW-0414">Isoprene biosynthesis</keyword>
<keyword id="KW-1185">Reference proteome</keyword>
<keyword id="KW-0808">Transferase</keyword>